<proteinExistence type="evidence at transcript level"/>
<reference key="1">
    <citation type="journal article" date="2013" name="Toxins">
        <title>A proteomics and transcriptomics investigation of the venom from the barychelid spider Trittame loki (brush-foot trapdoor).</title>
        <authorList>
            <person name="Undheim E.A."/>
            <person name="Sunagar K."/>
            <person name="Herzig V."/>
            <person name="Kely L."/>
            <person name="Low D.H."/>
            <person name="Jackson T.N."/>
            <person name="Jones A."/>
            <person name="Kurniawan N."/>
            <person name="King G.F."/>
            <person name="Ali S.A."/>
            <person name="Antunes A."/>
            <person name="Ruder T."/>
            <person name="Fry B.G."/>
        </authorList>
    </citation>
    <scope>NUCLEOTIDE SEQUENCE [MRNA]</scope>
    <source>
        <tissue>Venom gland</tissue>
    </source>
</reference>
<sequence>MKTLVLVAVLGLASLYLLSYASEVQQLSVAEEEFGALIDAFGGLLETEERGVNKEGCRKFLGGCENTGQCCLHLFCKYDTPFNHFCAWDLSFGRK</sequence>
<organism>
    <name type="scientific">Trittame loki</name>
    <name type="common">Brush-footed trapdoor spider</name>
    <dbReference type="NCBI Taxonomy" id="1295018"/>
    <lineage>
        <taxon>Eukaryota</taxon>
        <taxon>Metazoa</taxon>
        <taxon>Ecdysozoa</taxon>
        <taxon>Arthropoda</taxon>
        <taxon>Chelicerata</taxon>
        <taxon>Arachnida</taxon>
        <taxon>Araneae</taxon>
        <taxon>Mygalomorphae</taxon>
        <taxon>Barychelidae</taxon>
        <taxon>Trittame</taxon>
    </lineage>
</organism>
<accession>W4VRV4</accession>
<comment type="function">
    <text evidence="4">Ion channel inhibitor.</text>
</comment>
<comment type="subcellular location">
    <subcellularLocation>
        <location evidence="1">Secreted</location>
    </subcellularLocation>
</comment>
<comment type="tissue specificity">
    <text>Expressed by the venom gland.</text>
</comment>
<comment type="domain">
    <text evidence="1">The presence of a 'disulfide through disulfide knot' structurally defines this protein as a knottin.</text>
</comment>
<comment type="similarity">
    <text evidence="4">Belongs to the neurotoxin 10 (Hwtx-1) family. 26 (ICK-1) subfamily.</text>
</comment>
<dbReference type="EMBL" id="GAQE01000004">
    <property type="protein sequence ID" value="JAB84550.1"/>
    <property type="molecule type" value="Transcribed_RNA"/>
</dbReference>
<dbReference type="SMR" id="W4VRV4"/>
<dbReference type="ArachnoServer" id="AS001768">
    <property type="toxin name" value="U8-barytoxin-Tl1a"/>
</dbReference>
<dbReference type="GO" id="GO:0005576">
    <property type="term" value="C:extracellular region"/>
    <property type="evidence" value="ECO:0007669"/>
    <property type="project" value="UniProtKB-SubCell"/>
</dbReference>
<dbReference type="GO" id="GO:0008200">
    <property type="term" value="F:ion channel inhibitor activity"/>
    <property type="evidence" value="ECO:0007669"/>
    <property type="project" value="InterPro"/>
</dbReference>
<dbReference type="GO" id="GO:0090729">
    <property type="term" value="F:toxin activity"/>
    <property type="evidence" value="ECO:0007669"/>
    <property type="project" value="UniProtKB-KW"/>
</dbReference>
<dbReference type="InterPro" id="IPR011696">
    <property type="entry name" value="Huwentoxin-1"/>
</dbReference>
<dbReference type="Pfam" id="PF07740">
    <property type="entry name" value="Toxin_12"/>
    <property type="match status" value="1"/>
</dbReference>
<dbReference type="SUPFAM" id="SSF57059">
    <property type="entry name" value="omega toxin-like"/>
    <property type="match status" value="1"/>
</dbReference>
<protein>
    <recommendedName>
        <fullName>U8-barytoxin-Tl1a</fullName>
        <shortName>U8-BATX-Tl1a</shortName>
    </recommendedName>
    <alternativeName>
        <fullName evidence="3">Toxin ICK-1</fullName>
    </alternativeName>
</protein>
<evidence type="ECO:0000250" key="1"/>
<evidence type="ECO:0000255" key="2"/>
<evidence type="ECO:0000303" key="3">
    <source>
    </source>
</evidence>
<evidence type="ECO:0000305" key="4"/>
<name>ICK1_TRILK</name>
<keyword id="KW-1015">Disulfide bond</keyword>
<keyword id="KW-0872">Ion channel impairing toxin</keyword>
<keyword id="KW-0960">Knottin</keyword>
<keyword id="KW-0964">Secreted</keyword>
<keyword id="KW-0732">Signal</keyword>
<keyword id="KW-0800">Toxin</keyword>
<feature type="signal peptide" evidence="2">
    <location>
        <begin position="1"/>
        <end position="21"/>
    </location>
</feature>
<feature type="propeptide" id="PRO_0000434822" evidence="4">
    <location>
        <begin position="22"/>
        <end position="50"/>
    </location>
</feature>
<feature type="chain" id="PRO_0000429208" description="U8-barytoxin-Tl1a">
    <location>
        <begin position="51"/>
        <end position="95"/>
    </location>
</feature>
<feature type="disulfide bond" evidence="1">
    <location>
        <begin position="57"/>
        <end position="71"/>
    </location>
</feature>
<feature type="disulfide bond" evidence="1">
    <location>
        <begin position="64"/>
        <end position="76"/>
    </location>
</feature>
<feature type="disulfide bond" evidence="1">
    <location>
        <begin position="70"/>
        <end position="86"/>
    </location>
</feature>